<organism>
    <name type="scientific">Acinetobacter baumannii (strain AB307-0294)</name>
    <dbReference type="NCBI Taxonomy" id="557600"/>
    <lineage>
        <taxon>Bacteria</taxon>
        <taxon>Pseudomonadati</taxon>
        <taxon>Pseudomonadota</taxon>
        <taxon>Gammaproteobacteria</taxon>
        <taxon>Moraxellales</taxon>
        <taxon>Moraxellaceae</taxon>
        <taxon>Acinetobacter</taxon>
        <taxon>Acinetobacter calcoaceticus/baumannii complex</taxon>
    </lineage>
</organism>
<feature type="chain" id="PRO_1000119360" description="Bifunctional uridylyltransferase/uridylyl-removing enzyme">
    <location>
        <begin position="1"/>
        <end position="887"/>
    </location>
</feature>
<feature type="domain" description="HD" evidence="2">
    <location>
        <begin position="457"/>
        <end position="579"/>
    </location>
</feature>
<feature type="domain" description="ACT 1" evidence="1">
    <location>
        <begin position="700"/>
        <end position="782"/>
    </location>
</feature>
<feature type="domain" description="ACT 2" evidence="1">
    <location>
        <begin position="809"/>
        <end position="887"/>
    </location>
</feature>
<feature type="region of interest" description="Uridylyltransferase">
    <location>
        <begin position="1"/>
        <end position="337"/>
    </location>
</feature>
<feature type="region of interest" description="Uridylyl-removing">
    <location>
        <begin position="339"/>
        <end position="699"/>
    </location>
</feature>
<keyword id="KW-0378">Hydrolase</keyword>
<keyword id="KW-0460">Magnesium</keyword>
<keyword id="KW-0511">Multifunctional enzyme</keyword>
<keyword id="KW-0548">Nucleotidyltransferase</keyword>
<keyword id="KW-0677">Repeat</keyword>
<keyword id="KW-0808">Transferase</keyword>
<gene>
    <name evidence="1" type="primary">glnD</name>
    <name type="ordered locus">ABBFA_002013</name>
</gene>
<name>GLND_ACIB3</name>
<proteinExistence type="inferred from homology"/>
<reference key="1">
    <citation type="journal article" date="2008" name="J. Bacteriol.">
        <title>Comparative genome sequence analysis of multidrug-resistant Acinetobacter baumannii.</title>
        <authorList>
            <person name="Adams M.D."/>
            <person name="Goglin K."/>
            <person name="Molyneaux N."/>
            <person name="Hujer K.M."/>
            <person name="Lavender H."/>
            <person name="Jamison J.J."/>
            <person name="MacDonald I.J."/>
            <person name="Martin K.M."/>
            <person name="Russo T."/>
            <person name="Campagnari A.A."/>
            <person name="Hujer A.M."/>
            <person name="Bonomo R.A."/>
            <person name="Gill S.R."/>
        </authorList>
    </citation>
    <scope>NUCLEOTIDE SEQUENCE [LARGE SCALE GENOMIC DNA]</scope>
    <source>
        <strain>AB307-0294</strain>
    </source>
</reference>
<comment type="function">
    <text evidence="1">Modifies, by uridylylation and deuridylylation, the PII regulatory proteins (GlnB and homologs), in response to the nitrogen status of the cell that GlnD senses through the glutamine level. Under low glutamine levels, catalyzes the conversion of the PII proteins and UTP to PII-UMP and PPi, while under higher glutamine levels, GlnD hydrolyzes PII-UMP to PII and UMP (deuridylylation). Thus, controls uridylylation state and activity of the PII proteins, and plays an important role in the regulation of nitrogen assimilation and metabolism.</text>
</comment>
<comment type="catalytic activity">
    <reaction evidence="1">
        <text>[protein-PII]-L-tyrosine + UTP = [protein-PII]-uridylyl-L-tyrosine + diphosphate</text>
        <dbReference type="Rhea" id="RHEA:13673"/>
        <dbReference type="Rhea" id="RHEA-COMP:12147"/>
        <dbReference type="Rhea" id="RHEA-COMP:12148"/>
        <dbReference type="ChEBI" id="CHEBI:33019"/>
        <dbReference type="ChEBI" id="CHEBI:46398"/>
        <dbReference type="ChEBI" id="CHEBI:46858"/>
        <dbReference type="ChEBI" id="CHEBI:90602"/>
        <dbReference type="EC" id="2.7.7.59"/>
    </reaction>
</comment>
<comment type="catalytic activity">
    <reaction evidence="1">
        <text>[protein-PII]-uridylyl-L-tyrosine + H2O = [protein-PII]-L-tyrosine + UMP + H(+)</text>
        <dbReference type="Rhea" id="RHEA:48600"/>
        <dbReference type="Rhea" id="RHEA-COMP:12147"/>
        <dbReference type="Rhea" id="RHEA-COMP:12148"/>
        <dbReference type="ChEBI" id="CHEBI:15377"/>
        <dbReference type="ChEBI" id="CHEBI:15378"/>
        <dbReference type="ChEBI" id="CHEBI:46858"/>
        <dbReference type="ChEBI" id="CHEBI:57865"/>
        <dbReference type="ChEBI" id="CHEBI:90602"/>
    </reaction>
</comment>
<comment type="cofactor">
    <cofactor evidence="1">
        <name>Mg(2+)</name>
        <dbReference type="ChEBI" id="CHEBI:18420"/>
    </cofactor>
</comment>
<comment type="activity regulation">
    <text evidence="1">Uridylyltransferase (UTase) activity is inhibited by glutamine, while glutamine activates uridylyl-removing (UR) activity.</text>
</comment>
<comment type="domain">
    <text evidence="1">Has four distinct domains: an N-terminal nucleotidyltransferase (NT) domain responsible for UTase activity, a central HD domain that encodes UR activity, and two C-terminal ACT domains that seem to have a role in glutamine sensing.</text>
</comment>
<comment type="similarity">
    <text evidence="1">Belongs to the GlnD family.</text>
</comment>
<dbReference type="EC" id="2.7.7.59" evidence="1"/>
<dbReference type="EC" id="3.1.4.-" evidence="1"/>
<dbReference type="EMBL" id="CP001172">
    <property type="protein sequence ID" value="ACJ57124.1"/>
    <property type="molecule type" value="Genomic_DNA"/>
</dbReference>
<dbReference type="RefSeq" id="WP_000611178.1">
    <property type="nucleotide sequence ID" value="NZ_CP001172.1"/>
</dbReference>
<dbReference type="SMR" id="B7H3W7"/>
<dbReference type="GeneID" id="92893684"/>
<dbReference type="HOGENOM" id="CLU_012833_0_0_6"/>
<dbReference type="Proteomes" id="UP000006924">
    <property type="component" value="Chromosome"/>
</dbReference>
<dbReference type="GO" id="GO:0008773">
    <property type="term" value="F:[protein-PII] uridylyltransferase activity"/>
    <property type="evidence" value="ECO:0007669"/>
    <property type="project" value="UniProtKB-UniRule"/>
</dbReference>
<dbReference type="GO" id="GO:0008081">
    <property type="term" value="F:phosphoric diester hydrolase activity"/>
    <property type="evidence" value="ECO:0007669"/>
    <property type="project" value="UniProtKB-UniRule"/>
</dbReference>
<dbReference type="GO" id="GO:0006808">
    <property type="term" value="P:regulation of nitrogen utilization"/>
    <property type="evidence" value="ECO:0007669"/>
    <property type="project" value="UniProtKB-UniRule"/>
</dbReference>
<dbReference type="CDD" id="cd04899">
    <property type="entry name" value="ACT_ACR-UUR-like_2"/>
    <property type="match status" value="1"/>
</dbReference>
<dbReference type="CDD" id="cd04900">
    <property type="entry name" value="ACT_UUR-like_1"/>
    <property type="match status" value="1"/>
</dbReference>
<dbReference type="CDD" id="cd00077">
    <property type="entry name" value="HDc"/>
    <property type="match status" value="1"/>
</dbReference>
<dbReference type="CDD" id="cd05401">
    <property type="entry name" value="NT_GlnE_GlnD_like"/>
    <property type="match status" value="1"/>
</dbReference>
<dbReference type="Gene3D" id="1.10.3210.10">
    <property type="entry name" value="Hypothetical protein af1432"/>
    <property type="match status" value="1"/>
</dbReference>
<dbReference type="Gene3D" id="1.20.120.330">
    <property type="entry name" value="Nucleotidyltransferases domain 2"/>
    <property type="match status" value="1"/>
</dbReference>
<dbReference type="HAMAP" id="MF_00277">
    <property type="entry name" value="PII_uridylyl_transf"/>
    <property type="match status" value="1"/>
</dbReference>
<dbReference type="InterPro" id="IPR045865">
    <property type="entry name" value="ACT-like_dom_sf"/>
</dbReference>
<dbReference type="InterPro" id="IPR002912">
    <property type="entry name" value="ACT_dom"/>
</dbReference>
<dbReference type="InterPro" id="IPR003607">
    <property type="entry name" value="HD/PDEase_dom"/>
</dbReference>
<dbReference type="InterPro" id="IPR006674">
    <property type="entry name" value="HD_domain"/>
</dbReference>
<dbReference type="InterPro" id="IPR043519">
    <property type="entry name" value="NT_sf"/>
</dbReference>
<dbReference type="InterPro" id="IPR013546">
    <property type="entry name" value="PII_UdlTrfase/GS_AdlTrfase"/>
</dbReference>
<dbReference type="InterPro" id="IPR002934">
    <property type="entry name" value="Polymerase_NTP_transf_dom"/>
</dbReference>
<dbReference type="InterPro" id="IPR010043">
    <property type="entry name" value="UTase/UR"/>
</dbReference>
<dbReference type="NCBIfam" id="TIGR01693">
    <property type="entry name" value="UTase_glnD"/>
    <property type="match status" value="1"/>
</dbReference>
<dbReference type="PANTHER" id="PTHR47320">
    <property type="entry name" value="BIFUNCTIONAL URIDYLYLTRANSFERASE/URIDYLYL-REMOVING ENZYME"/>
    <property type="match status" value="1"/>
</dbReference>
<dbReference type="PANTHER" id="PTHR47320:SF1">
    <property type="entry name" value="BIFUNCTIONAL URIDYLYLTRANSFERASE_URIDYLYL-REMOVING ENZYME"/>
    <property type="match status" value="1"/>
</dbReference>
<dbReference type="Pfam" id="PF01842">
    <property type="entry name" value="ACT"/>
    <property type="match status" value="1"/>
</dbReference>
<dbReference type="Pfam" id="PF08335">
    <property type="entry name" value="GlnD_UR_UTase"/>
    <property type="match status" value="1"/>
</dbReference>
<dbReference type="Pfam" id="PF01966">
    <property type="entry name" value="HD"/>
    <property type="match status" value="1"/>
</dbReference>
<dbReference type="Pfam" id="PF01909">
    <property type="entry name" value="NTP_transf_2"/>
    <property type="match status" value="1"/>
</dbReference>
<dbReference type="PIRSF" id="PIRSF006288">
    <property type="entry name" value="PII_uridyltransf"/>
    <property type="match status" value="1"/>
</dbReference>
<dbReference type="SMART" id="SM00471">
    <property type="entry name" value="HDc"/>
    <property type="match status" value="1"/>
</dbReference>
<dbReference type="SUPFAM" id="SSF55021">
    <property type="entry name" value="ACT-like"/>
    <property type="match status" value="1"/>
</dbReference>
<dbReference type="SUPFAM" id="SSF109604">
    <property type="entry name" value="HD-domain/PDEase-like"/>
    <property type="match status" value="1"/>
</dbReference>
<dbReference type="SUPFAM" id="SSF81301">
    <property type="entry name" value="Nucleotidyltransferase"/>
    <property type="match status" value="1"/>
</dbReference>
<dbReference type="SUPFAM" id="SSF81593">
    <property type="entry name" value="Nucleotidyltransferase substrate binding subunit/domain"/>
    <property type="match status" value="1"/>
</dbReference>
<dbReference type="PROSITE" id="PS51671">
    <property type="entry name" value="ACT"/>
    <property type="match status" value="2"/>
</dbReference>
<dbReference type="PROSITE" id="PS51831">
    <property type="entry name" value="HD"/>
    <property type="match status" value="1"/>
</dbReference>
<protein>
    <recommendedName>
        <fullName evidence="1">Bifunctional uridylyltransferase/uridylyl-removing enzyme</fullName>
        <shortName evidence="1">UTase/UR</shortName>
    </recommendedName>
    <alternativeName>
        <fullName evidence="1">Bifunctional [protein-PII] modification enzyme</fullName>
    </alternativeName>
    <alternativeName>
        <fullName evidence="1">Bifunctional nitrogen sensor protein</fullName>
    </alternativeName>
    <domain>
        <recommendedName>
            <fullName evidence="1">[Protein-PII] uridylyltransferase</fullName>
            <shortName evidence="1">PII uridylyltransferase</shortName>
            <shortName evidence="1">UTase</shortName>
            <ecNumber evidence="1">2.7.7.59</ecNumber>
        </recommendedName>
    </domain>
    <domain>
        <recommendedName>
            <fullName evidence="1">[Protein-PII]-UMP uridylyl-removing enzyme</fullName>
            <shortName evidence="1">UR</shortName>
            <ecNumber evidence="1">3.1.4.-</ecNumber>
        </recommendedName>
    </domain>
</protein>
<accession>B7H3W7</accession>
<evidence type="ECO:0000255" key="1">
    <source>
        <dbReference type="HAMAP-Rule" id="MF_00277"/>
    </source>
</evidence>
<evidence type="ECO:0000255" key="2">
    <source>
        <dbReference type="PROSITE-ProRule" id="PRU01175"/>
    </source>
</evidence>
<sequence>MINTSPLLNYVSSHHDIKAINQWRTDVEKQLQDSYENGQSIREIIKARSDLVDEALVFLWKHAELDQSKLGLFAVGGYGRREMLPYSDVDIMILSEDEISEENEKRISTFISSLWDVGNFKPGISVRTIQSCVEQAATDLTVATTLIEARLITGNTQLAKWPRRIVSQTWTDKTFYDAKMAEQAKRYHQHNNTESNLEPDIKNAPGGIRDINQIGWIAKRHFRVNRIYDLVHLGFISEFELAVLEEAESFLWEIRHHLHRLAKRDENRLLFDHQREIAAKFGYVRQEGQPVNYGVEQFMKRYYRTAQQVSTLNEMLLAYFSESVITPRLPNYERKIEVVNDHFKIVDNKLAVQHHKIFAEHPSAILELFYILANRPDIEGIRARTLRLLILAAKRINQSYRDNPEHQALFMSIIRSPYRLYDTLVAMKRYGVLGNYIPAFGQIMGLMQYDLFHIYTVDAHTLLLLRNLNRFREPEFAKEFPVVSSVFQRLARQDIVFIAALFHDIAKGRGGDHSELGAEDAIEFGRAHGFTERECKLIAWLIQNHLLMSLTAQKKDISDPDVVKDFAEKLGDMEHLDYLYTLTVADINATNPKLWNTWRASLMRQLYTHARDVIRTGLGRPVDYQMLIEDTKFAASELLVNNFALADVEKVWQELGDEYFIKESADEIAWHTQAILKHGDNPEPLVLLRAHRKAAQDAVQIFIYTRDQPNLFATTVAVLDRMNLDVQDAKIITASTAFSLDTYVVLDRFGTLLTDPEREETVKNALVKALSQPDQYPGLMQRRIPRQLRHFDIENTVDVTLNEALQQNMVEISTLDHPGLLARVGGLFMMQGLDIHSARIATLGERAEDIFFVTKKDGKPLNNEEVKLFSEKLKAALDEASNQICQH</sequence>